<proteinExistence type="inferred from homology"/>
<protein>
    <recommendedName>
        <fullName evidence="1">Transcription attenuation protein MtrB</fullName>
    </recommendedName>
    <alternativeName>
        <fullName evidence="1">Trp RNA-binding attenuation protein</fullName>
        <shortName evidence="1">TRAP</shortName>
    </alternativeName>
    <alternativeName>
        <fullName evidence="1">Tryptophan RNA-binding attenuator protein</fullName>
    </alternativeName>
</protein>
<feature type="chain" id="PRO_1000212968" description="Transcription attenuation protein MtrB">
    <location>
        <begin position="1"/>
        <end position="74"/>
    </location>
</feature>
<sequence>MNINSDYIVIKALEDGVNVIGLTRGADTRFHHSEKLDKGEVLIAQFTEHTSAIKVRGKAYIQTRHGEIESEGKK</sequence>
<gene>
    <name evidence="1" type="primary">mtrB</name>
    <name type="ordered locus">GWCH70_2152</name>
</gene>
<accession>C5D3E7</accession>
<reference key="1">
    <citation type="submission" date="2009-06" db="EMBL/GenBank/DDBJ databases">
        <title>Complete sequence of chromosome of Geopacillus sp. WCH70.</title>
        <authorList>
            <consortium name="US DOE Joint Genome Institute"/>
            <person name="Lucas S."/>
            <person name="Copeland A."/>
            <person name="Lapidus A."/>
            <person name="Glavina del Rio T."/>
            <person name="Dalin E."/>
            <person name="Tice H."/>
            <person name="Bruce D."/>
            <person name="Goodwin L."/>
            <person name="Pitluck S."/>
            <person name="Chertkov O."/>
            <person name="Brettin T."/>
            <person name="Detter J.C."/>
            <person name="Han C."/>
            <person name="Larimer F."/>
            <person name="Land M."/>
            <person name="Hauser L."/>
            <person name="Kyrpides N."/>
            <person name="Mikhailova N."/>
            <person name="Brumm P."/>
            <person name="Mead D.A."/>
            <person name="Richardson P."/>
        </authorList>
    </citation>
    <scope>NUCLEOTIDE SEQUENCE [LARGE SCALE GENOMIC DNA]</scope>
    <source>
        <strain>WCH70</strain>
    </source>
</reference>
<name>MTRB_GEOSW</name>
<comment type="function">
    <text evidence="1">Required for transcription attenuation control in the Trp operon. This trans-acting factor seems to recognize a 10 bases nucleotide sequence in the Trp leader transcript causing transcription termination. Binds the leader RNA only in presence of L-tryptophan.</text>
</comment>
<comment type="subunit">
    <text evidence="1">Oligomer of 11 identical subunits arranged in doughnut-like structure.</text>
</comment>
<comment type="similarity">
    <text evidence="1">Belongs to the MtrB family.</text>
</comment>
<organism>
    <name type="scientific">Geobacillus sp. (strain WCH70)</name>
    <dbReference type="NCBI Taxonomy" id="471223"/>
    <lineage>
        <taxon>Bacteria</taxon>
        <taxon>Bacillati</taxon>
        <taxon>Bacillota</taxon>
        <taxon>Bacilli</taxon>
        <taxon>Bacillales</taxon>
        <taxon>Anoxybacillaceae</taxon>
        <taxon>Geobacillus</taxon>
    </lineage>
</organism>
<evidence type="ECO:0000255" key="1">
    <source>
        <dbReference type="HAMAP-Rule" id="MF_00798"/>
    </source>
</evidence>
<dbReference type="EMBL" id="CP001638">
    <property type="protein sequence ID" value="ACS24862.1"/>
    <property type="molecule type" value="Genomic_DNA"/>
</dbReference>
<dbReference type="SMR" id="C5D3E7"/>
<dbReference type="STRING" id="471223.GWCH70_2152"/>
<dbReference type="KEGG" id="gwc:GWCH70_2152"/>
<dbReference type="eggNOG" id="ENOG5032Z9Y">
    <property type="taxonomic scope" value="Bacteria"/>
</dbReference>
<dbReference type="HOGENOM" id="CLU_180875_0_0_9"/>
<dbReference type="OrthoDB" id="2111980at2"/>
<dbReference type="GO" id="GO:0003723">
    <property type="term" value="F:RNA binding"/>
    <property type="evidence" value="ECO:0007669"/>
    <property type="project" value="UniProtKB-UniRule"/>
</dbReference>
<dbReference type="GO" id="GO:0006353">
    <property type="term" value="P:DNA-templated transcription termination"/>
    <property type="evidence" value="ECO:0007669"/>
    <property type="project" value="InterPro"/>
</dbReference>
<dbReference type="GO" id="GO:0006355">
    <property type="term" value="P:regulation of DNA-templated transcription"/>
    <property type="evidence" value="ECO:0007669"/>
    <property type="project" value="InterPro"/>
</dbReference>
<dbReference type="FunFam" id="2.60.40.50:FF:000001">
    <property type="entry name" value="Transcription attenuation protein MtrB"/>
    <property type="match status" value="1"/>
</dbReference>
<dbReference type="Gene3D" id="2.60.40.50">
    <property type="entry name" value="TRAP-like"/>
    <property type="match status" value="1"/>
</dbReference>
<dbReference type="HAMAP" id="MF_00798">
    <property type="entry name" value="Trp_attenuator"/>
    <property type="match status" value="1"/>
</dbReference>
<dbReference type="InterPro" id="IPR000824">
    <property type="entry name" value="MtrB"/>
</dbReference>
<dbReference type="InterPro" id="IPR016031">
    <property type="entry name" value="Trp_RNA-bd_attenuator-like_dom"/>
</dbReference>
<dbReference type="InterPro" id="IPR023558">
    <property type="entry name" value="Trp_RNA-bd_attenuator_dom"/>
</dbReference>
<dbReference type="NCBIfam" id="NF009724">
    <property type="entry name" value="PRK13251.1"/>
    <property type="match status" value="1"/>
</dbReference>
<dbReference type="Pfam" id="PF02081">
    <property type="entry name" value="TrpBP"/>
    <property type="match status" value="1"/>
</dbReference>
<dbReference type="PRINTS" id="PR00687">
    <property type="entry name" value="TRPRNAAP"/>
</dbReference>
<dbReference type="SUPFAM" id="SSF51219">
    <property type="entry name" value="TRAP-like"/>
    <property type="match status" value="1"/>
</dbReference>
<keyword id="KW-0694">RNA-binding</keyword>
<keyword id="KW-0804">Transcription</keyword>
<keyword id="KW-0805">Transcription regulation</keyword>